<comment type="function">
    <text evidence="3 5">Catalyzes the hydroxylation of L-phenylalanine to L-tyrosine (PubMed:10928216, PubMed:18460651). Catalyzes the hydroxylation of tryptophan to 5-hydroxy-L-tryptophan (PubMed:10928216). Plays a role in the biosynthesis of a melanin-like cuticle pigment (PubMed:18460651).</text>
</comment>
<comment type="catalytic activity">
    <reaction evidence="3 5">
        <text>(6R)-L-erythro-5,6,7,8-tetrahydrobiopterin + L-phenylalanine + O2 = (4aS,6R)-4a-hydroxy-L-erythro-5,6,7,8-tetrahydrobiopterin + L-tyrosine</text>
        <dbReference type="Rhea" id="RHEA:20273"/>
        <dbReference type="ChEBI" id="CHEBI:15379"/>
        <dbReference type="ChEBI" id="CHEBI:15642"/>
        <dbReference type="ChEBI" id="CHEBI:58095"/>
        <dbReference type="ChEBI" id="CHEBI:58315"/>
        <dbReference type="ChEBI" id="CHEBI:59560"/>
        <dbReference type="EC" id="1.14.16.1"/>
    </reaction>
</comment>
<comment type="catalytic activity">
    <reaction evidence="3">
        <text>(6R)-L-erythro-5,6,7,8-tetrahydrobiopterin + L-tryptophan + O2 = 5-hydroxy-L-tryptophan + (4aS,6R)-4a-hydroxy-L-erythro-5,6,7,8-tetrahydrobiopterin</text>
        <dbReference type="Rhea" id="RHEA:16709"/>
        <dbReference type="ChEBI" id="CHEBI:15379"/>
        <dbReference type="ChEBI" id="CHEBI:15642"/>
        <dbReference type="ChEBI" id="CHEBI:57912"/>
        <dbReference type="ChEBI" id="CHEBI:58266"/>
        <dbReference type="ChEBI" id="CHEBI:59560"/>
        <dbReference type="EC" id="1.14.16.4"/>
    </reaction>
</comment>
<comment type="cofactor">
    <cofactor evidence="1">
        <name>Fe(2+)</name>
        <dbReference type="ChEBI" id="CHEBI:29033"/>
    </cofactor>
</comment>
<comment type="activity regulation">
    <text evidence="5">Inhibited by tetrahydrobiopterin. Unlike its mammalian orthologs, pah-1 does not exhibit allosteric binding behavior for phenylalanine.</text>
</comment>
<comment type="biophysicochemical properties">
    <kinetics>
        <KM evidence="5">146 uM for L-phenylalanine (at 25 degrees Celsius)</KM>
        <KM evidence="5">33 uM for tetrahydrobiopterin (BH(4)) (at 25 degrees Celsius)</KM>
        <Vmax evidence="5">3.3 umol/min/mg enzyme towards L-phenylalanine (at 25 degrees Celsius)</Vmax>
        <Vmax evidence="5">3.22 umol/min/mg enzyme towards tetrahydrobiopterin (BH(4)) (at 25 degrees Celsius)</Vmax>
    </kinetics>
</comment>
<comment type="pathway">
    <text>Amino-acid degradation; L-phenylalanine degradation; acetoacetate and fumarate from L-phenylalanine: step 1/6.</text>
</comment>
<comment type="subunit">
    <text evidence="5">Homotetramer.</text>
</comment>
<comment type="interaction">
    <interactant intactId="EBI-318020">
        <id>P90925</id>
    </interactant>
    <interactant intactId="EBI-314419">
        <id>O01869</id>
        <label>rps-10</label>
    </interactant>
    <organismsDiffer>false</organismsDiffer>
    <experiments>3</experiments>
</comment>
<comment type="subcellular location">
    <subcellularLocation>
        <location evidence="3">Cytoplasm</location>
    </subcellularLocation>
</comment>
<comment type="alternative products">
    <event type="alternative splicing"/>
    <isoform>
        <id>P90925-1</id>
        <name evidence="8">a</name>
        <sequence type="displayed"/>
    </isoform>
    <isoform>
        <id>P90925-2</id>
        <name evidence="9">b</name>
        <sequence type="described" ref="VSP_059801"/>
    </isoform>
</comment>
<comment type="tissue specificity">
    <text evidence="3">Expressed in the seam cells of the lateral hypodermis, in the ventral hypodermis and in the hyp7 hypodermal syncytium, in hypodermal cells in the tail and in body wall muscle cells (at protein level).</text>
</comment>
<comment type="developmental stage">
    <text evidence="3 5">Expressed during all larval stages and in adult animals (at protein level).</text>
</comment>
<comment type="disruption phenotype">
    <text evidence="4 5">Reduced L-phenylalanine hydroxylation. Lack of a yellow-orange pheomelanine-like pigment in the cuticle. Higher cuticle resistance to physical or chemical disintegration factors or oxidizing environments. Increase in superoxide dismutase activity. Increased life span. In a bli-3(e767) mutant background, growth arrest in early larval development, severe cuticle abnormalities with large blisters and increased superoxide dismutase activity. RNAi-mediated knockdown together with fah-1 RNAi partially rescues the impaired growth and fertility defects in the single fah-1 RNAi mutant (PubMed:18227072).</text>
</comment>
<comment type="similarity">
    <text evidence="7">Belongs to the biopterin-dependent aromatic amino acid hydroxylase family.</text>
</comment>
<comment type="sequence caution" evidence="7">
    <conflict type="frameshift">
        <sequence resource="EMBL-CDS" id="AAD31643"/>
    </conflict>
</comment>
<name>PH4H_CAEEL</name>
<proteinExistence type="evidence at protein level"/>
<sequence>MPPAGQDDLDFLKYAMESYVADVNADIGKTTIVFTLREKAGALAETLKLFQAHDVNLSHIESRPSKTHEGCYEVLVEFAEAEDHRKIEGVIEHFQQKAEKKVLVQDWNTKNKQNKDSVPWFPQKINDIDQFANRILSYGAELDADHPGFKDMTYRERRKFFADIAFNFKHGDKIPTITYTDEEIATWRTVYNELTVMYPKNACQEFNYIFPLLQQNCGFGPDRIPQLQDVSDFLKDCTGYTIRPVAGLLSSRDFLAGLAFRVFHSTQYIRHHSAPKYTPEPDICHELLGHVPLFADVEFAQFSQEIGLASLGAPDDVIEKLATLYWFTIEFGICQQDGEKKAYGAGLLSSFGELQYALSDKPEVVDFDPAVCCVTKYPITEYQPKYFLAESFASAKNKLKSWAATINRPFQIRYNAYTQRVEILDKVAALQRLARDIRSDISTLEEALGKVNNLKMK</sequence>
<reference key="1">
    <citation type="journal article" date="1999" name="J. Neurogenet.">
        <title>A phenylalanine hydroxylase gene from the nematode C. elegans is expressed in the hypodermis.</title>
        <authorList>
            <person name="Loer C.M."/>
            <person name="Davidson B."/>
            <person name="Mckerrow J."/>
        </authorList>
    </citation>
    <scope>NUCLEOTIDE SEQUENCE [MRNA] (ISOFORM A)</scope>
    <scope>FUNCTION</scope>
    <scope>CATALYTIC ACTIVITY</scope>
    <scope>SUBCELLULAR LOCATION</scope>
    <scope>TISSUE SPECIFICITY</scope>
    <scope>DEVELOPMENTAL STAGE</scope>
</reference>
<reference key="2">
    <citation type="journal article" date="1998" name="Science">
        <title>Genome sequence of the nematode C. elegans: a platform for investigating biology.</title>
        <authorList>
            <consortium name="The C. elegans sequencing consortium"/>
        </authorList>
    </citation>
    <scope>NUCLEOTIDE SEQUENCE [LARGE SCALE GENOMIC DNA]</scope>
    <source>
        <strain>Bristol N2</strain>
    </source>
</reference>
<reference key="3">
    <citation type="journal article" date="2008" name="FASEB J.">
        <title>Anabolic function of phenylalanine hydroxylase in Caenorhabditis elegans.</title>
        <authorList>
            <person name="Calvo A.C."/>
            <person name="Pey A.L."/>
            <person name="Ying M."/>
            <person name="Loer C.M."/>
            <person name="Martinez A."/>
        </authorList>
    </citation>
    <scope>FUNCTION</scope>
    <scope>CATALYTIC ACTIVITY</scope>
    <scope>ACTIVITY REGULATION</scope>
    <scope>BIOPHYSICOCHEMICAL PROPERTIES</scope>
    <scope>SUBUNIT</scope>
    <scope>DEVELOPMENTAL STAGE</scope>
    <scope>DISRUPTION PHENOTYPE</scope>
</reference>
<reference key="4">
    <citation type="journal article" date="2008" name="J. Biol. Chem.">
        <title>The Caenorhabditis elegans K10C2.4 gene encodes a member of the fumarylacetoacetate hydrolase family: a Caenorhabditis elegans model of type I tyrosinemia.</title>
        <authorList>
            <person name="Fisher A.L."/>
            <person name="Page K.E."/>
            <person name="Lithgow G.J."/>
            <person name="Nash L."/>
        </authorList>
    </citation>
    <scope>DISRUPTION PHENOTYPE</scope>
</reference>
<organism>
    <name type="scientific">Caenorhabditis elegans</name>
    <dbReference type="NCBI Taxonomy" id="6239"/>
    <lineage>
        <taxon>Eukaryota</taxon>
        <taxon>Metazoa</taxon>
        <taxon>Ecdysozoa</taxon>
        <taxon>Nematoda</taxon>
        <taxon>Chromadorea</taxon>
        <taxon>Rhabditida</taxon>
        <taxon>Rhabditina</taxon>
        <taxon>Rhabditomorpha</taxon>
        <taxon>Rhabditoidea</taxon>
        <taxon>Rhabditidae</taxon>
        <taxon>Peloderinae</taxon>
        <taxon>Caenorhabditis</taxon>
    </lineage>
</organism>
<keyword id="KW-0025">Alternative splicing</keyword>
<keyword id="KW-0963">Cytoplasm</keyword>
<keyword id="KW-0408">Iron</keyword>
<keyword id="KW-0479">Metal-binding</keyword>
<keyword id="KW-0503">Monooxygenase</keyword>
<keyword id="KW-0560">Oxidoreductase</keyword>
<keyword id="KW-0585">Phenylalanine catabolism</keyword>
<keyword id="KW-1185">Reference proteome</keyword>
<protein>
    <recommendedName>
        <fullName evidence="6">Phenylalanine-4-hydroxylase</fullName>
        <shortName>PAH</shortName>
        <ecNumber evidence="3 5">1.14.16.1</ecNumber>
        <ecNumber evidence="3">1.14.16.4</ecNumber>
    </recommendedName>
    <alternativeName>
        <fullName>Biogenic amine synthesis protein 2</fullName>
    </alternativeName>
    <alternativeName>
        <fullName>Phe-4-monooxygenase</fullName>
    </alternativeName>
    <alternativeName>
        <fullName evidence="7">Tryptophan 5-monooxygenase</fullName>
    </alternativeName>
</protein>
<feature type="chain" id="PRO_0000205551" description="Phenylalanine-4-hydroxylase">
    <location>
        <begin position="1"/>
        <end position="457"/>
    </location>
</feature>
<feature type="domain" description="ACT" evidence="2">
    <location>
        <begin position="31"/>
        <end position="108"/>
    </location>
</feature>
<feature type="binding site" evidence="1">
    <location>
        <position position="285"/>
    </location>
    <ligand>
        <name>Fe cation</name>
        <dbReference type="ChEBI" id="CHEBI:24875"/>
    </ligand>
</feature>
<feature type="binding site" evidence="1">
    <location>
        <position position="290"/>
    </location>
    <ligand>
        <name>Fe cation</name>
        <dbReference type="ChEBI" id="CHEBI:24875"/>
    </ligand>
</feature>
<feature type="binding site" evidence="1">
    <location>
        <position position="330"/>
    </location>
    <ligand>
        <name>Fe cation</name>
        <dbReference type="ChEBI" id="CHEBI:24875"/>
    </ligand>
</feature>
<feature type="splice variant" id="VSP_059801" description="In isoform b.">
    <original>MPPAGQDDLDFL</original>
    <variation>MNIDEIRK</variation>
    <location>
        <begin position="1"/>
        <end position="12"/>
    </location>
</feature>
<feature type="sequence conflict" description="In Ref. 1; AAD31643." evidence="7" ref="1">
    <original>S</original>
    <variation>P</variation>
    <location>
        <position position="251"/>
    </location>
</feature>
<feature type="sequence conflict" description="In Ref. 1; AAD31643." evidence="7" ref="1">
    <original>L</original>
    <variation>W</variation>
    <location>
        <position position="258"/>
    </location>
</feature>
<accession>P90925</accession>
<accession>I2HA98</accession>
<accession>Q9XYQ5</accession>
<gene>
    <name evidence="8" type="primary">pah-1</name>
    <name evidence="8" type="synonym">bas-2</name>
    <name evidence="8" type="ORF">K08F8.4</name>
</gene>
<evidence type="ECO:0000250" key="1">
    <source>
        <dbReference type="UniProtKB" id="P04176"/>
    </source>
</evidence>
<evidence type="ECO:0000255" key="2">
    <source>
        <dbReference type="PROSITE-ProRule" id="PRU01007"/>
    </source>
</evidence>
<evidence type="ECO:0000269" key="3">
    <source>
    </source>
</evidence>
<evidence type="ECO:0000269" key="4">
    <source>
    </source>
</evidence>
<evidence type="ECO:0000269" key="5">
    <source>
    </source>
</evidence>
<evidence type="ECO:0000303" key="6">
    <source>
    </source>
</evidence>
<evidence type="ECO:0000305" key="7"/>
<evidence type="ECO:0000312" key="8">
    <source>
        <dbReference type="WormBase" id="K08F8.4a"/>
    </source>
</evidence>
<evidence type="ECO:0000312" key="9">
    <source>
        <dbReference type="WormBase" id="K08F8.4b"/>
    </source>
</evidence>
<dbReference type="EC" id="1.14.16.1" evidence="3 5"/>
<dbReference type="EC" id="1.14.16.4" evidence="3"/>
<dbReference type="EMBL" id="AF119388">
    <property type="protein sequence ID" value="AAD31643.1"/>
    <property type="status" value="ALT_FRAME"/>
    <property type="molecule type" value="mRNA"/>
</dbReference>
<dbReference type="EMBL" id="Z66497">
    <property type="protein sequence ID" value="CAA91286.1"/>
    <property type="molecule type" value="Genomic_DNA"/>
</dbReference>
<dbReference type="EMBL" id="BX284602">
    <property type="protein sequence ID" value="CCH63805.1"/>
    <property type="molecule type" value="Genomic_DNA"/>
</dbReference>
<dbReference type="PIR" id="T23494">
    <property type="entry name" value="T23494"/>
</dbReference>
<dbReference type="RefSeq" id="NP_001254184.1">
    <molecule id="P90925-2"/>
    <property type="nucleotide sequence ID" value="NM_001267255.3"/>
</dbReference>
<dbReference type="RefSeq" id="NP_001254185.1">
    <molecule id="P90925-1"/>
    <property type="nucleotide sequence ID" value="NM_001267256.2"/>
</dbReference>
<dbReference type="SMR" id="P90925"/>
<dbReference type="BioGRID" id="39728">
    <property type="interactions" value="20"/>
</dbReference>
<dbReference type="DIP" id="DIP-25264N"/>
<dbReference type="FunCoup" id="P90925">
    <property type="interactions" value="167"/>
</dbReference>
<dbReference type="IntAct" id="P90925">
    <property type="interactions" value="17"/>
</dbReference>
<dbReference type="STRING" id="6239.K08F8.4a.1"/>
<dbReference type="PaxDb" id="6239-K08F8.4a"/>
<dbReference type="PeptideAtlas" id="P90925"/>
<dbReference type="EnsemblMetazoa" id="K08F8.4a.1">
    <molecule id="P90925-1"/>
    <property type="protein sequence ID" value="K08F8.4a.1"/>
    <property type="gene ID" value="WBGene00000240"/>
</dbReference>
<dbReference type="EnsemblMetazoa" id="K08F8.4b.1">
    <molecule id="P90925-2"/>
    <property type="protein sequence ID" value="K08F8.4b.1"/>
    <property type="gene ID" value="WBGene00000240"/>
</dbReference>
<dbReference type="GeneID" id="174401"/>
<dbReference type="KEGG" id="cel:CELE_K08F8.4"/>
<dbReference type="UCSC" id="K08F8.4">
    <molecule id="P90925-1"/>
    <property type="organism name" value="c. elegans"/>
</dbReference>
<dbReference type="AGR" id="WB:WBGene00000240"/>
<dbReference type="CTD" id="174401"/>
<dbReference type="WormBase" id="K08F8.4a">
    <molecule id="P90925-1"/>
    <property type="protein sequence ID" value="CE21050"/>
    <property type="gene ID" value="WBGene00000240"/>
    <property type="gene designation" value="pah-1"/>
</dbReference>
<dbReference type="WormBase" id="K08F8.4b">
    <molecule id="P90925-2"/>
    <property type="protein sequence ID" value="CE47563"/>
    <property type="gene ID" value="WBGene00000240"/>
    <property type="gene designation" value="pah-1"/>
</dbReference>
<dbReference type="eggNOG" id="KOG3820">
    <property type="taxonomic scope" value="Eukaryota"/>
</dbReference>
<dbReference type="GeneTree" id="ENSGT00950000182885"/>
<dbReference type="HOGENOM" id="CLU_023198_0_1_1"/>
<dbReference type="InParanoid" id="P90925"/>
<dbReference type="OMA" id="FHDEVYR"/>
<dbReference type="OrthoDB" id="983542at2759"/>
<dbReference type="PhylomeDB" id="P90925"/>
<dbReference type="BRENDA" id="1.14.16.1">
    <property type="organism ID" value="1045"/>
</dbReference>
<dbReference type="Reactome" id="R-CEL-8964208">
    <property type="pathway name" value="Phenylalanine metabolism"/>
</dbReference>
<dbReference type="UniPathway" id="UPA00139">
    <property type="reaction ID" value="UER00337"/>
</dbReference>
<dbReference type="PRO" id="PR:P90925"/>
<dbReference type="Proteomes" id="UP000001940">
    <property type="component" value="Chromosome II"/>
</dbReference>
<dbReference type="Bgee" id="WBGene00000240">
    <property type="expression patterns" value="Expressed in larva and 3 other cell types or tissues"/>
</dbReference>
<dbReference type="GO" id="GO:0005737">
    <property type="term" value="C:cytoplasm"/>
    <property type="evidence" value="ECO:0007669"/>
    <property type="project" value="UniProtKB-SubCell"/>
</dbReference>
<dbReference type="GO" id="GO:0005506">
    <property type="term" value="F:iron ion binding"/>
    <property type="evidence" value="ECO:0007669"/>
    <property type="project" value="InterPro"/>
</dbReference>
<dbReference type="GO" id="GO:0004505">
    <property type="term" value="F:phenylalanine 4-monooxygenase activity"/>
    <property type="evidence" value="ECO:0000314"/>
    <property type="project" value="WormBase"/>
</dbReference>
<dbReference type="GO" id="GO:0004510">
    <property type="term" value="F:tryptophan 5-monooxygenase activity"/>
    <property type="evidence" value="ECO:0000314"/>
    <property type="project" value="WormBase"/>
</dbReference>
<dbReference type="GO" id="GO:0040002">
    <property type="term" value="P:collagen and cuticulin-based cuticle development"/>
    <property type="evidence" value="ECO:0000316"/>
    <property type="project" value="WormBase"/>
</dbReference>
<dbReference type="GO" id="GO:0008340">
    <property type="term" value="P:determination of adult lifespan"/>
    <property type="evidence" value="ECO:0000315"/>
    <property type="project" value="WormBase"/>
</dbReference>
<dbReference type="GO" id="GO:0006559">
    <property type="term" value="P:L-phenylalanine catabolic process"/>
    <property type="evidence" value="ECO:0000314"/>
    <property type="project" value="WormBase"/>
</dbReference>
<dbReference type="GO" id="GO:0006569">
    <property type="term" value="P:L-tryptophan catabolic process"/>
    <property type="evidence" value="ECO:0000314"/>
    <property type="project" value="WormBase"/>
</dbReference>
<dbReference type="GO" id="GO:0042438">
    <property type="term" value="P:melanin biosynthetic process"/>
    <property type="evidence" value="ECO:0000315"/>
    <property type="project" value="WormBase"/>
</dbReference>
<dbReference type="GO" id="GO:0022414">
    <property type="term" value="P:reproductive process"/>
    <property type="evidence" value="ECO:0000315"/>
    <property type="project" value="WormBase"/>
</dbReference>
<dbReference type="GO" id="GO:0006979">
    <property type="term" value="P:response to oxidative stress"/>
    <property type="evidence" value="ECO:0000315"/>
    <property type="project" value="WormBase"/>
</dbReference>
<dbReference type="GO" id="GO:0006571">
    <property type="term" value="P:tyrosine biosynthetic process"/>
    <property type="evidence" value="ECO:0000314"/>
    <property type="project" value="WormBase"/>
</dbReference>
<dbReference type="CDD" id="cd04904">
    <property type="entry name" value="ACT_AAAH"/>
    <property type="match status" value="1"/>
</dbReference>
<dbReference type="CDD" id="cd03347">
    <property type="entry name" value="eu_PheOH"/>
    <property type="match status" value="1"/>
</dbReference>
<dbReference type="FunFam" id="1.10.800.10:FF:000004">
    <property type="entry name" value="Tyrosine 3-monooxygenase"/>
    <property type="match status" value="1"/>
</dbReference>
<dbReference type="Gene3D" id="1.10.800.10">
    <property type="entry name" value="Aromatic amino acid hydroxylase"/>
    <property type="match status" value="1"/>
</dbReference>
<dbReference type="InterPro" id="IPR045865">
    <property type="entry name" value="ACT-like_dom_sf"/>
</dbReference>
<dbReference type="InterPro" id="IPR002912">
    <property type="entry name" value="ACT_dom"/>
</dbReference>
<dbReference type="InterPro" id="IPR001273">
    <property type="entry name" value="ArAA_hydroxylase"/>
</dbReference>
<dbReference type="InterPro" id="IPR018301">
    <property type="entry name" value="ArAA_hydroxylase_Fe/CU_BS"/>
</dbReference>
<dbReference type="InterPro" id="IPR036951">
    <property type="entry name" value="ArAA_hydroxylase_sf"/>
</dbReference>
<dbReference type="InterPro" id="IPR036329">
    <property type="entry name" value="Aro-AA_hydroxylase_C_sf"/>
</dbReference>
<dbReference type="InterPro" id="IPR019774">
    <property type="entry name" value="Aromatic-AA_hydroxylase_C"/>
</dbReference>
<dbReference type="InterPro" id="IPR041912">
    <property type="entry name" value="Euk_PheOH_cat"/>
</dbReference>
<dbReference type="InterPro" id="IPR005961">
    <property type="entry name" value="Phe-4-hydroxylase_tetra"/>
</dbReference>
<dbReference type="InterPro" id="IPR019773">
    <property type="entry name" value="Tyrosine_3-monooxygenase-like"/>
</dbReference>
<dbReference type="NCBIfam" id="TIGR01268">
    <property type="entry name" value="Phe4hydrox_tetr"/>
    <property type="match status" value="1"/>
</dbReference>
<dbReference type="PANTHER" id="PTHR11473">
    <property type="entry name" value="AROMATIC AMINO ACID HYDROXYLASE"/>
    <property type="match status" value="1"/>
</dbReference>
<dbReference type="PANTHER" id="PTHR11473:SF24">
    <property type="entry name" value="PHENYLALANINE-4-HYDROXYLASE"/>
    <property type="match status" value="1"/>
</dbReference>
<dbReference type="Pfam" id="PF01842">
    <property type="entry name" value="ACT"/>
    <property type="match status" value="1"/>
</dbReference>
<dbReference type="Pfam" id="PF00351">
    <property type="entry name" value="Biopterin_H"/>
    <property type="match status" value="1"/>
</dbReference>
<dbReference type="PIRSF" id="PIRSF000336">
    <property type="entry name" value="TH"/>
    <property type="match status" value="1"/>
</dbReference>
<dbReference type="PRINTS" id="PR00372">
    <property type="entry name" value="FYWHYDRXLASE"/>
</dbReference>
<dbReference type="SUPFAM" id="SSF55021">
    <property type="entry name" value="ACT-like"/>
    <property type="match status" value="1"/>
</dbReference>
<dbReference type="SUPFAM" id="SSF56534">
    <property type="entry name" value="Aromatic aminoacid monoxygenases, catalytic and oligomerization domains"/>
    <property type="match status" value="1"/>
</dbReference>
<dbReference type="PROSITE" id="PS51671">
    <property type="entry name" value="ACT"/>
    <property type="match status" value="1"/>
</dbReference>
<dbReference type="PROSITE" id="PS00367">
    <property type="entry name" value="BH4_AAA_HYDROXYL_1"/>
    <property type="match status" value="1"/>
</dbReference>
<dbReference type="PROSITE" id="PS51410">
    <property type="entry name" value="BH4_AAA_HYDROXYL_2"/>
    <property type="match status" value="1"/>
</dbReference>